<name>PDXJ_SYNY3</name>
<dbReference type="EC" id="2.6.99.2" evidence="1"/>
<dbReference type="EMBL" id="BA000022">
    <property type="protein sequence ID" value="BAA16791.1"/>
    <property type="status" value="ALT_INIT"/>
    <property type="molecule type" value="Genomic_DNA"/>
</dbReference>
<dbReference type="PIR" id="S74639">
    <property type="entry name" value="S74639"/>
</dbReference>
<dbReference type="SMR" id="P72776"/>
<dbReference type="STRING" id="1148.gene:10497647"/>
<dbReference type="PaxDb" id="1148-1651864"/>
<dbReference type="EnsemblBacteria" id="BAA16791">
    <property type="protein sequence ID" value="BAA16791"/>
    <property type="gene ID" value="BAA16791"/>
</dbReference>
<dbReference type="KEGG" id="syn:slr1779"/>
<dbReference type="eggNOG" id="COG0854">
    <property type="taxonomic scope" value="Bacteria"/>
</dbReference>
<dbReference type="InParanoid" id="P72776"/>
<dbReference type="PhylomeDB" id="P72776"/>
<dbReference type="UniPathway" id="UPA00244">
    <property type="reaction ID" value="UER00313"/>
</dbReference>
<dbReference type="Proteomes" id="UP000001425">
    <property type="component" value="Chromosome"/>
</dbReference>
<dbReference type="GO" id="GO:0005829">
    <property type="term" value="C:cytosol"/>
    <property type="evidence" value="ECO:0000318"/>
    <property type="project" value="GO_Central"/>
</dbReference>
<dbReference type="GO" id="GO:0033856">
    <property type="term" value="F:pyridoxine 5'-phosphate synthase activity"/>
    <property type="evidence" value="ECO:0000318"/>
    <property type="project" value="GO_Central"/>
</dbReference>
<dbReference type="GO" id="GO:0008615">
    <property type="term" value="P:pyridoxine biosynthetic process"/>
    <property type="evidence" value="ECO:0000318"/>
    <property type="project" value="GO_Central"/>
</dbReference>
<dbReference type="CDD" id="cd00003">
    <property type="entry name" value="PNPsynthase"/>
    <property type="match status" value="1"/>
</dbReference>
<dbReference type="Gene3D" id="3.20.20.70">
    <property type="entry name" value="Aldolase class I"/>
    <property type="match status" value="1"/>
</dbReference>
<dbReference type="HAMAP" id="MF_00279">
    <property type="entry name" value="PdxJ"/>
    <property type="match status" value="1"/>
</dbReference>
<dbReference type="InterPro" id="IPR013785">
    <property type="entry name" value="Aldolase_TIM"/>
</dbReference>
<dbReference type="InterPro" id="IPR004569">
    <property type="entry name" value="PyrdxlP_synth_PdxJ"/>
</dbReference>
<dbReference type="InterPro" id="IPR036130">
    <property type="entry name" value="Pyridoxine-5'_phos_synth"/>
</dbReference>
<dbReference type="NCBIfam" id="TIGR00559">
    <property type="entry name" value="pdxJ"/>
    <property type="match status" value="1"/>
</dbReference>
<dbReference type="NCBIfam" id="NF003625">
    <property type="entry name" value="PRK05265.1-3"/>
    <property type="match status" value="1"/>
</dbReference>
<dbReference type="NCBIfam" id="NF003627">
    <property type="entry name" value="PRK05265.1-5"/>
    <property type="match status" value="1"/>
</dbReference>
<dbReference type="PANTHER" id="PTHR30456">
    <property type="entry name" value="PYRIDOXINE 5'-PHOSPHATE SYNTHASE"/>
    <property type="match status" value="1"/>
</dbReference>
<dbReference type="PANTHER" id="PTHR30456:SF0">
    <property type="entry name" value="PYRIDOXINE 5'-PHOSPHATE SYNTHASE"/>
    <property type="match status" value="1"/>
</dbReference>
<dbReference type="Pfam" id="PF03740">
    <property type="entry name" value="PdxJ"/>
    <property type="match status" value="1"/>
</dbReference>
<dbReference type="SUPFAM" id="SSF63892">
    <property type="entry name" value="Pyridoxine 5'-phosphate synthase"/>
    <property type="match status" value="1"/>
</dbReference>
<feature type="chain" id="PRO_0000190134" description="Pyridoxine 5'-phosphate synthase">
    <location>
        <begin position="1"/>
        <end position="242"/>
    </location>
</feature>
<feature type="active site" description="Proton acceptor" evidence="1">
    <location>
        <position position="44"/>
    </location>
</feature>
<feature type="active site" description="Proton acceptor" evidence="1">
    <location>
        <position position="71"/>
    </location>
</feature>
<feature type="active site" description="Proton donor" evidence="1">
    <location>
        <position position="192"/>
    </location>
</feature>
<feature type="binding site" evidence="1">
    <location>
        <position position="7"/>
    </location>
    <ligand>
        <name>3-amino-2-oxopropyl phosphate</name>
        <dbReference type="ChEBI" id="CHEBI:57279"/>
    </ligand>
</feature>
<feature type="binding site" evidence="1">
    <location>
        <begin position="9"/>
        <end position="10"/>
    </location>
    <ligand>
        <name>1-deoxy-D-xylulose 5-phosphate</name>
        <dbReference type="ChEBI" id="CHEBI:57792"/>
    </ligand>
</feature>
<feature type="binding site" evidence="1">
    <location>
        <position position="18"/>
    </location>
    <ligand>
        <name>3-amino-2-oxopropyl phosphate</name>
        <dbReference type="ChEBI" id="CHEBI:57279"/>
    </ligand>
</feature>
<feature type="binding site" evidence="1">
    <location>
        <position position="46"/>
    </location>
    <ligand>
        <name>1-deoxy-D-xylulose 5-phosphate</name>
        <dbReference type="ChEBI" id="CHEBI:57792"/>
    </ligand>
</feature>
<feature type="binding site" evidence="1">
    <location>
        <position position="51"/>
    </location>
    <ligand>
        <name>1-deoxy-D-xylulose 5-phosphate</name>
        <dbReference type="ChEBI" id="CHEBI:57792"/>
    </ligand>
</feature>
<feature type="binding site" evidence="1">
    <location>
        <position position="101"/>
    </location>
    <ligand>
        <name>1-deoxy-D-xylulose 5-phosphate</name>
        <dbReference type="ChEBI" id="CHEBI:57792"/>
    </ligand>
</feature>
<feature type="binding site" evidence="1">
    <location>
        <position position="193"/>
    </location>
    <ligand>
        <name>3-amino-2-oxopropyl phosphate</name>
        <dbReference type="ChEBI" id="CHEBI:57279"/>
    </ligand>
</feature>
<feature type="binding site" evidence="1">
    <location>
        <begin position="214"/>
        <end position="215"/>
    </location>
    <ligand>
        <name>3-amino-2-oxopropyl phosphate</name>
        <dbReference type="ChEBI" id="CHEBI:57279"/>
    </ligand>
</feature>
<feature type="site" description="Transition state stabilizer" evidence="1">
    <location>
        <position position="152"/>
    </location>
</feature>
<protein>
    <recommendedName>
        <fullName evidence="1">Pyridoxine 5'-phosphate synthase</fullName>
        <shortName evidence="1">PNP synthase</shortName>
        <ecNumber evidence="1">2.6.99.2</ecNumber>
    </recommendedName>
</protein>
<gene>
    <name evidence="1" type="primary">pdxJ</name>
    <name type="ordered locus">slr1779</name>
</gene>
<proteinExistence type="inferred from homology"/>
<comment type="function">
    <text evidence="1">Catalyzes the complicated ring closure reaction between the two acyclic compounds 1-deoxy-D-xylulose-5-phosphate (DXP) and 3-amino-2-oxopropyl phosphate (1-amino-acetone-3-phosphate or AAP) to form pyridoxine 5'-phosphate (PNP) and inorganic phosphate.</text>
</comment>
<comment type="catalytic activity">
    <reaction evidence="1">
        <text>3-amino-2-oxopropyl phosphate + 1-deoxy-D-xylulose 5-phosphate = pyridoxine 5'-phosphate + phosphate + 2 H2O + H(+)</text>
        <dbReference type="Rhea" id="RHEA:15265"/>
        <dbReference type="ChEBI" id="CHEBI:15377"/>
        <dbReference type="ChEBI" id="CHEBI:15378"/>
        <dbReference type="ChEBI" id="CHEBI:43474"/>
        <dbReference type="ChEBI" id="CHEBI:57279"/>
        <dbReference type="ChEBI" id="CHEBI:57792"/>
        <dbReference type="ChEBI" id="CHEBI:58589"/>
        <dbReference type="EC" id="2.6.99.2"/>
    </reaction>
</comment>
<comment type="pathway">
    <text evidence="1">Cofactor biosynthesis; pyridoxine 5'-phosphate biosynthesis; pyridoxine 5'-phosphate from D-erythrose 4-phosphate: step 5/5.</text>
</comment>
<comment type="subunit">
    <text evidence="1">Homooctamer; tetramer of dimers.</text>
</comment>
<comment type="subcellular location">
    <subcellularLocation>
        <location evidence="1">Cytoplasm</location>
    </subcellularLocation>
</comment>
<comment type="similarity">
    <text evidence="1">Belongs to the PNP synthase family.</text>
</comment>
<comment type="sequence caution" evidence="2">
    <conflict type="erroneous initiation">
        <sequence resource="EMBL-CDS" id="BAA16791"/>
    </conflict>
</comment>
<accession>P72776</accession>
<reference key="1">
    <citation type="journal article" date="1996" name="DNA Res.">
        <title>Sequence analysis of the genome of the unicellular cyanobacterium Synechocystis sp. strain PCC6803. II. Sequence determination of the entire genome and assignment of potential protein-coding regions.</title>
        <authorList>
            <person name="Kaneko T."/>
            <person name="Sato S."/>
            <person name="Kotani H."/>
            <person name="Tanaka A."/>
            <person name="Asamizu E."/>
            <person name="Nakamura Y."/>
            <person name="Miyajima N."/>
            <person name="Hirosawa M."/>
            <person name="Sugiura M."/>
            <person name="Sasamoto S."/>
            <person name="Kimura T."/>
            <person name="Hosouchi T."/>
            <person name="Matsuno A."/>
            <person name="Muraki A."/>
            <person name="Nakazaki N."/>
            <person name="Naruo K."/>
            <person name="Okumura S."/>
            <person name="Shimpo S."/>
            <person name="Takeuchi C."/>
            <person name="Wada T."/>
            <person name="Watanabe A."/>
            <person name="Yamada M."/>
            <person name="Yasuda M."/>
            <person name="Tabata S."/>
        </authorList>
    </citation>
    <scope>NUCLEOTIDE SEQUENCE [LARGE SCALE GENOMIC DNA]</scope>
    <source>
        <strain>ATCC 27184 / PCC 6803 / Kazusa</strain>
    </source>
</reference>
<keyword id="KW-0963">Cytoplasm</keyword>
<keyword id="KW-0664">Pyridoxine biosynthesis</keyword>
<keyword id="KW-1185">Reference proteome</keyword>
<keyword id="KW-0808">Transferase</keyword>
<evidence type="ECO:0000255" key="1">
    <source>
        <dbReference type="HAMAP-Rule" id="MF_00279"/>
    </source>
</evidence>
<evidence type="ECO:0000305" key="2"/>
<sequence>MLTLGVNIDHVATIRQARQTVMEPDPIAAAVLAELAGADGITAHLREDRRHIQERDVEILRKTVRTHLNLEMAATKEMVEIALNLKPDYVTLVPERREEVTTEGGLDVAGNLNYLLGVVEQLQSRHIPVSLFIDPDVAQLKASAQTGAKFIELHTGKYANAPTADDQARELGSLAIACDIALELGLRINAGHGLTYWNVRPVAELPGMEELNIGHSIMSRAILVGMERAVREMKLAMLGLPF</sequence>
<organism>
    <name type="scientific">Synechocystis sp. (strain ATCC 27184 / PCC 6803 / Kazusa)</name>
    <dbReference type="NCBI Taxonomy" id="1111708"/>
    <lineage>
        <taxon>Bacteria</taxon>
        <taxon>Bacillati</taxon>
        <taxon>Cyanobacteriota</taxon>
        <taxon>Cyanophyceae</taxon>
        <taxon>Synechococcales</taxon>
        <taxon>Merismopediaceae</taxon>
        <taxon>Synechocystis</taxon>
    </lineage>
</organism>